<sequence>MKLSLLSLATLASAASLQRRSDFCGQWDTATAGDFTLYNDLWGESAGTGSQCTGVDSYSGDTIAWHTSWSWSGGSSSVKSYVNAALTFTPTQLNCISSIPTTWKWSYSGSSIVADVAYDTFLAETASGSSKYEIMVWLAALGGAGPISSTGSTIATPTIAGVNWKLYSGPNGDTTVYSFVADSTTESFSGDLNDFFTYLVDNEGVSDELYLTTLEAGTEPFTGSNAKLTVSEYSISIE</sequence>
<name>XGEA_ASPAC</name>
<proteinExistence type="evidence at protein level"/>
<reference key="1">
    <citation type="journal article" date="1999" name="Glycobiology">
        <title>A xyloglucan-specific endo-beta-1,4-glucanase from Aspergillus aculeatus: expression cloning in yeast, purification and characterization of the recombinant enzyme.</title>
        <authorList>
            <person name="Pauly M."/>
            <person name="Andersen L.N."/>
            <person name="Kauppinen S."/>
            <person name="Kofod L.V."/>
            <person name="York W.S."/>
            <person name="Albersheim P."/>
            <person name="Darvill A."/>
        </authorList>
    </citation>
    <scope>NUCLEOTIDE SEQUENCE [MRNA]</scope>
    <scope>FUNCTION</scope>
    <scope>BIOPHYSICOCHEMICAL PROPERTIES</scope>
    <source>
        <strain>KSM 510</strain>
    </source>
</reference>
<reference key="2">
    <citation type="journal article" date="2004" name="FEBS Lett.">
        <title>Enhancement of growth and cellulose accumulation by overexpression of xyloglucanase in poplar.</title>
        <authorList>
            <person name="Park Y.W."/>
            <person name="Baba K."/>
            <person name="Furuta Y."/>
            <person name="Iida I."/>
            <person name="Sameshima K."/>
            <person name="Arai M."/>
            <person name="Hayashi T."/>
        </authorList>
    </citation>
    <scope>NUCLEOTIDE SEQUENCE [MRNA] OF 19-238</scope>
    <scope>FUNCTION</scope>
</reference>
<keyword id="KW-0002">3D-structure</keyword>
<keyword id="KW-0119">Carbohydrate metabolism</keyword>
<keyword id="KW-0961">Cell wall biogenesis/degradation</keyword>
<keyword id="KW-0326">Glycosidase</keyword>
<keyword id="KW-0378">Hydrolase</keyword>
<keyword id="KW-0624">Polysaccharide degradation</keyword>
<keyword id="KW-0964">Secreted</keyword>
<keyword id="KW-0732">Signal</keyword>
<evidence type="ECO:0000255" key="1"/>
<evidence type="ECO:0000269" key="2">
    <source>
    </source>
</evidence>
<evidence type="ECO:0000269" key="3">
    <source>
    </source>
</evidence>
<evidence type="ECO:0000305" key="4"/>
<evidence type="ECO:0007829" key="5">
    <source>
        <dbReference type="PDB" id="3VL9"/>
    </source>
</evidence>
<evidence type="ECO:0007829" key="6">
    <source>
        <dbReference type="PDB" id="3VLB"/>
    </source>
</evidence>
<organism>
    <name type="scientific">Aspergillus aculeatus</name>
    <dbReference type="NCBI Taxonomy" id="5053"/>
    <lineage>
        <taxon>Eukaryota</taxon>
        <taxon>Fungi</taxon>
        <taxon>Dikarya</taxon>
        <taxon>Ascomycota</taxon>
        <taxon>Pezizomycotina</taxon>
        <taxon>Eurotiomycetes</taxon>
        <taxon>Eurotiomycetidae</taxon>
        <taxon>Eurotiales</taxon>
        <taxon>Aspergillaceae</taxon>
        <taxon>Aspergillus</taxon>
        <taxon>Aspergillus subgen. Circumdati</taxon>
    </lineage>
</organism>
<feature type="signal peptide" evidence="1">
    <location>
        <begin position="1"/>
        <end position="14"/>
    </location>
</feature>
<feature type="chain" id="PRO_5000054062" description="Xyloglucan-specific endo-beta-1,4-glucanase A">
    <location>
        <begin position="15"/>
        <end position="238"/>
    </location>
</feature>
<feature type="strand" evidence="6">
    <location>
        <begin position="25"/>
        <end position="27"/>
    </location>
</feature>
<feature type="strand" evidence="5">
    <location>
        <begin position="29"/>
        <end position="32"/>
    </location>
</feature>
<feature type="strand" evidence="5">
    <location>
        <begin position="35"/>
        <end position="38"/>
    </location>
</feature>
<feature type="helix" evidence="5">
    <location>
        <begin position="44"/>
        <end position="46"/>
    </location>
</feature>
<feature type="strand" evidence="5">
    <location>
        <begin position="47"/>
        <end position="59"/>
    </location>
</feature>
<feature type="strand" evidence="5">
    <location>
        <begin position="62"/>
        <end position="73"/>
    </location>
</feature>
<feature type="strand" evidence="6">
    <location>
        <begin position="75"/>
        <end position="77"/>
    </location>
</feature>
<feature type="strand" evidence="5">
    <location>
        <begin position="82"/>
        <end position="86"/>
    </location>
</feature>
<feature type="helix" evidence="5">
    <location>
        <begin position="93"/>
        <end position="95"/>
    </location>
</feature>
<feature type="strand" evidence="5">
    <location>
        <begin position="100"/>
        <end position="125"/>
    </location>
</feature>
<feature type="strand" evidence="5">
    <location>
        <begin position="130"/>
        <end position="141"/>
    </location>
</feature>
<feature type="strand" evidence="5">
    <location>
        <begin position="149"/>
        <end position="152"/>
    </location>
</feature>
<feature type="strand" evidence="5">
    <location>
        <begin position="162"/>
        <end position="171"/>
    </location>
</feature>
<feature type="strand" evidence="5">
    <location>
        <begin position="174"/>
        <end position="183"/>
    </location>
</feature>
<feature type="strand" evidence="5">
    <location>
        <begin position="186"/>
        <end position="191"/>
    </location>
</feature>
<feature type="helix" evidence="5">
    <location>
        <begin position="193"/>
        <end position="202"/>
    </location>
</feature>
<feature type="strand" evidence="5">
    <location>
        <begin position="209"/>
        <end position="235"/>
    </location>
</feature>
<comment type="function">
    <text evidence="2 3">Catalyzes endohydrolysis of 1,4-beta-D-glucosidic linkages in xyloglucan with retention of the beta-configuration of the glycosyl residues. Specific for xyloglucan and does not hydrolyze other cell wall components.</text>
</comment>
<comment type="catalytic activity">
    <reaction>
        <text>xyloglucan + H2O = xyloglucan oligosaccharides.</text>
        <dbReference type="EC" id="3.2.1.151"/>
    </reaction>
</comment>
<comment type="biophysicochemical properties">
    <phDependence>
        <text evidence="3">Optimum pH is 3.4. Stability declines sharply below pH 2.8 and above pH 5.0.</text>
    </phDependence>
    <temperatureDependence>
        <text evidence="3">Optimum temperature is below 30 degrees Celsius. Is very stable below 35 degrees Celsius, but at 50 degrees Celsius, it loses 80 percent of its activity within 2 h.</text>
    </temperatureDependence>
</comment>
<comment type="subcellular location">
    <subcellularLocation>
        <location evidence="4">Secreted</location>
    </subcellularLocation>
</comment>
<comment type="similarity">
    <text evidence="4">Belongs to the glycosyl hydrolase 12 (cellulase H) family.</text>
</comment>
<accession>O94218</accession>
<accession>Q6YBY2</accession>
<dbReference type="EC" id="3.2.1.151"/>
<dbReference type="EMBL" id="AF043595">
    <property type="protein sequence ID" value="AAD02275.1"/>
    <property type="molecule type" value="mRNA"/>
</dbReference>
<dbReference type="EMBL" id="AY160774">
    <property type="protein sequence ID" value="AAO20340.1"/>
    <property type="molecule type" value="mRNA"/>
</dbReference>
<dbReference type="PDB" id="3VL8">
    <property type="method" value="X-ray"/>
    <property type="resolution" value="1.90 A"/>
    <property type="chains" value="A=15-238"/>
</dbReference>
<dbReference type="PDB" id="3VL9">
    <property type="method" value="X-ray"/>
    <property type="resolution" value="1.20 A"/>
    <property type="chains" value="A/B=15-238"/>
</dbReference>
<dbReference type="PDB" id="3VLB">
    <property type="method" value="X-ray"/>
    <property type="resolution" value="2.70 A"/>
    <property type="chains" value="B/D=21-238"/>
</dbReference>
<dbReference type="PDBsum" id="3VL8"/>
<dbReference type="PDBsum" id="3VL9"/>
<dbReference type="PDBsum" id="3VLB"/>
<dbReference type="SMR" id="O94218"/>
<dbReference type="CAZy" id="GH12">
    <property type="family name" value="Glycoside Hydrolase Family 12"/>
</dbReference>
<dbReference type="KEGG" id="ag:AAD02275"/>
<dbReference type="VEuPathDB" id="FungiDB:ASPACDRAFT_77812"/>
<dbReference type="BioCyc" id="MetaCyc:MONOMER-16602"/>
<dbReference type="BRENDA" id="3.2.1.151">
    <property type="organism ID" value="488"/>
</dbReference>
<dbReference type="EvolutionaryTrace" id="O94218"/>
<dbReference type="GO" id="GO:0005576">
    <property type="term" value="C:extracellular region"/>
    <property type="evidence" value="ECO:0007669"/>
    <property type="project" value="UniProtKB-SubCell"/>
</dbReference>
<dbReference type="GO" id="GO:0008810">
    <property type="term" value="F:cellulase activity"/>
    <property type="evidence" value="ECO:0007669"/>
    <property type="project" value="InterPro"/>
</dbReference>
<dbReference type="GO" id="GO:0033946">
    <property type="term" value="F:xyloglucan-specific endo-beta-1,4-glucanase activity"/>
    <property type="evidence" value="ECO:0007669"/>
    <property type="project" value="UniProtKB-EC"/>
</dbReference>
<dbReference type="GO" id="GO:0071555">
    <property type="term" value="P:cell wall organization"/>
    <property type="evidence" value="ECO:0007669"/>
    <property type="project" value="UniProtKB-KW"/>
</dbReference>
<dbReference type="GO" id="GO:0000272">
    <property type="term" value="P:polysaccharide catabolic process"/>
    <property type="evidence" value="ECO:0007669"/>
    <property type="project" value="UniProtKB-KW"/>
</dbReference>
<dbReference type="Gene3D" id="2.60.120.180">
    <property type="match status" value="1"/>
</dbReference>
<dbReference type="InterPro" id="IPR013320">
    <property type="entry name" value="ConA-like_dom_sf"/>
</dbReference>
<dbReference type="InterPro" id="IPR013319">
    <property type="entry name" value="GH11/12"/>
</dbReference>
<dbReference type="InterPro" id="IPR002594">
    <property type="entry name" value="GH12"/>
</dbReference>
<dbReference type="PANTHER" id="PTHR34002">
    <property type="entry name" value="BLR1656 PROTEIN"/>
    <property type="match status" value="1"/>
</dbReference>
<dbReference type="PANTHER" id="PTHR34002:SF9">
    <property type="entry name" value="XYLOGLUCAN-SPECIFIC ENDO-BETA-1,4-GLUCANASE A"/>
    <property type="match status" value="1"/>
</dbReference>
<dbReference type="Pfam" id="PF01670">
    <property type="entry name" value="Glyco_hydro_12"/>
    <property type="match status" value="1"/>
</dbReference>
<dbReference type="SUPFAM" id="SSF49899">
    <property type="entry name" value="Concanavalin A-like lectins/glucanases"/>
    <property type="match status" value="1"/>
</dbReference>
<gene>
    <name type="primary">xgeA</name>
</gene>
<protein>
    <recommendedName>
        <fullName>Xyloglucan-specific endo-beta-1,4-glucanase A</fullName>
        <ecNumber>3.2.1.151</ecNumber>
    </recommendedName>
    <alternativeName>
        <fullName>Xyloglucanase A</fullName>
    </alternativeName>
    <alternativeName>
        <fullName>Xyloglucanendohydrolase A</fullName>
    </alternativeName>
</protein>